<evidence type="ECO:0000255" key="1">
    <source>
        <dbReference type="HAMAP-Rule" id="MF_01390"/>
    </source>
</evidence>
<reference key="1">
    <citation type="submission" date="2004-01" db="EMBL/GenBank/DDBJ databases">
        <title>Phylogeny and classification of Pinus.</title>
        <authorList>
            <person name="Gernandt D."/>
            <person name="Geada-Lopez G."/>
            <person name="Liston A."/>
        </authorList>
    </citation>
    <scope>NUCLEOTIDE SEQUENCE [GENOMIC DNA]</scope>
    <source>
        <tissue>Leaf</tissue>
    </source>
</reference>
<keyword id="KW-0150">Chloroplast</keyword>
<keyword id="KW-0507">mRNA processing</keyword>
<keyword id="KW-0934">Plastid</keyword>
<keyword id="KW-0694">RNA-binding</keyword>
<keyword id="KW-0819">tRNA processing</keyword>
<dbReference type="EMBL" id="AB161015">
    <property type="protein sequence ID" value="BAD32758.1"/>
    <property type="molecule type" value="Genomic_DNA"/>
</dbReference>
<dbReference type="GO" id="GO:0009507">
    <property type="term" value="C:chloroplast"/>
    <property type="evidence" value="ECO:0007669"/>
    <property type="project" value="UniProtKB-SubCell"/>
</dbReference>
<dbReference type="GO" id="GO:0003723">
    <property type="term" value="F:RNA binding"/>
    <property type="evidence" value="ECO:0007669"/>
    <property type="project" value="UniProtKB-KW"/>
</dbReference>
<dbReference type="GO" id="GO:0006397">
    <property type="term" value="P:mRNA processing"/>
    <property type="evidence" value="ECO:0007669"/>
    <property type="project" value="UniProtKB-KW"/>
</dbReference>
<dbReference type="GO" id="GO:0008380">
    <property type="term" value="P:RNA splicing"/>
    <property type="evidence" value="ECO:0007669"/>
    <property type="project" value="UniProtKB-UniRule"/>
</dbReference>
<dbReference type="GO" id="GO:0008033">
    <property type="term" value="P:tRNA processing"/>
    <property type="evidence" value="ECO:0007669"/>
    <property type="project" value="UniProtKB-KW"/>
</dbReference>
<dbReference type="HAMAP" id="MF_01390">
    <property type="entry name" value="MatK"/>
    <property type="match status" value="1"/>
</dbReference>
<dbReference type="InterPro" id="IPR024937">
    <property type="entry name" value="Domain_X"/>
</dbReference>
<dbReference type="InterPro" id="IPR002866">
    <property type="entry name" value="Maturase_MatK"/>
</dbReference>
<dbReference type="InterPro" id="IPR024942">
    <property type="entry name" value="Maturase_MatK_N"/>
</dbReference>
<dbReference type="PANTHER" id="PTHR34811">
    <property type="entry name" value="MATURASE K"/>
    <property type="match status" value="1"/>
</dbReference>
<dbReference type="PANTHER" id="PTHR34811:SF1">
    <property type="entry name" value="MATURASE K"/>
    <property type="match status" value="1"/>
</dbReference>
<dbReference type="Pfam" id="PF01348">
    <property type="entry name" value="Intron_maturas2"/>
    <property type="match status" value="1"/>
</dbReference>
<dbReference type="Pfam" id="PF01824">
    <property type="entry name" value="MatK_N"/>
    <property type="match status" value="1"/>
</dbReference>
<feature type="chain" id="PRO_0000143633" description="Maturase K">
    <location>
        <begin position="1"/>
        <end position="515"/>
    </location>
</feature>
<sequence>MDEFHRCGKEDSFWQQCFLYPLFFQEDLYAISHDHYLDVSSSSRPMEHLSSNDQLSFLTVKRLIGQIRQQNHSIVLFVNCDPNPLADRKKSFYSESVLEALTLVLEVPFSIWSKSSVEGMNECKSFRSIHSIFPFLEDKFPHSNSILDARIPYSIHPEILVRTFRRWIRDAPSLHPLRSVLYDYRNSPENLQRSIIVVPRVNTRFFLFLLNYYVWECESILFSRLKRSSHSRSLSHGSFPQRTHFHRKIKHIIIFSRRNSLKSIWSLKDPKIHYVRYGERPIIAIKGADLLVKKCRYYLLIFRQFYFHLWSEPYRVCSHQLSKNCSSSLGYFLRVRMNPLLVRTKTLDELFIPVLITNEMDPIVPIVPIIGLLATEKFCDISGRPISKLSWTSLTDDDILDRFDQIWRNLFHYYSGSFDRDGLYRIKYILLLSCAKTLACKHKSTIRVVRKELGPELFKKSFSKEREFDSLPFSSKAAARSQRERIWHSDIPQINPLANSWQKIQDLKIENLFDQ</sequence>
<protein>
    <recommendedName>
        <fullName evidence="1">Maturase K</fullName>
    </recommendedName>
    <alternativeName>
        <fullName evidence="1">Intron maturase</fullName>
    </alternativeName>
</protein>
<geneLocation type="chloroplast"/>
<gene>
    <name evidence="1" type="primary">matK</name>
</gene>
<comment type="function">
    <text evidence="1">Usually encoded in the trnK tRNA gene intron. Probably assists in splicing its own and other chloroplast group II introns.</text>
</comment>
<comment type="subcellular location">
    <subcellularLocation>
        <location>Plastid</location>
        <location>Chloroplast</location>
    </subcellularLocation>
</comment>
<comment type="similarity">
    <text evidence="1">Belongs to the intron maturase 2 family. MatK subfamily.</text>
</comment>
<name>MATK_PINTB</name>
<accession>Q6BDH0</accession>
<proteinExistence type="inferred from homology"/>
<organism>
    <name type="scientific">Pinus tabuliformis</name>
    <name type="common">Chinese red pine</name>
    <name type="synonym">Pinus leucosperma</name>
    <dbReference type="NCBI Taxonomy" id="88731"/>
    <lineage>
        <taxon>Eukaryota</taxon>
        <taxon>Viridiplantae</taxon>
        <taxon>Streptophyta</taxon>
        <taxon>Embryophyta</taxon>
        <taxon>Tracheophyta</taxon>
        <taxon>Spermatophyta</taxon>
        <taxon>Pinopsida</taxon>
        <taxon>Pinidae</taxon>
        <taxon>Conifers I</taxon>
        <taxon>Pinales</taxon>
        <taxon>Pinaceae</taxon>
        <taxon>Pinus</taxon>
        <taxon>Pinus subgen. Pinus</taxon>
    </lineage>
</organism>